<dbReference type="EMBL" id="AK122212">
    <property type="protein sequence ID" value="BAC65494.2"/>
    <property type="status" value="ALT_INIT"/>
    <property type="molecule type" value="mRNA"/>
</dbReference>
<dbReference type="EMBL" id="AK031086">
    <property type="protein sequence ID" value="BAC27246.1"/>
    <property type="molecule type" value="mRNA"/>
</dbReference>
<dbReference type="EMBL" id="AK132183">
    <property type="protein sequence ID" value="BAE21019.1"/>
    <property type="molecule type" value="mRNA"/>
</dbReference>
<dbReference type="EMBL" id="AL645470">
    <property type="status" value="NOT_ANNOTATED_CDS"/>
    <property type="molecule type" value="Genomic_DNA"/>
</dbReference>
<dbReference type="CCDS" id="CCDS25641.1"/>
<dbReference type="RefSeq" id="NP_766636.2">
    <property type="nucleotide sequence ID" value="NM_173048.4"/>
</dbReference>
<dbReference type="SMR" id="Q8BMI3"/>
<dbReference type="BioGRID" id="234429">
    <property type="interactions" value="12"/>
</dbReference>
<dbReference type="ELM" id="Q8BMI3"/>
<dbReference type="FunCoup" id="Q8BMI3">
    <property type="interactions" value="2797"/>
</dbReference>
<dbReference type="STRING" id="10090.ENSMUSP00000019135"/>
<dbReference type="GlyGen" id="Q8BMI3">
    <property type="glycosylation" value="3 sites, 1 O-linked glycan (1 site)"/>
</dbReference>
<dbReference type="iPTMnet" id="Q8BMI3"/>
<dbReference type="PhosphoSitePlus" id="Q8BMI3"/>
<dbReference type="jPOST" id="Q8BMI3"/>
<dbReference type="PaxDb" id="10090-ENSMUSP00000019135"/>
<dbReference type="ProteomicsDB" id="266797"/>
<dbReference type="Pumba" id="Q8BMI3"/>
<dbReference type="Antibodypedia" id="19520">
    <property type="antibodies" value="196 antibodies from 32 providers"/>
</dbReference>
<dbReference type="DNASU" id="260302"/>
<dbReference type="Ensembl" id="ENSMUST00000019135.14">
    <property type="protein sequence ID" value="ENSMUSP00000019135.8"/>
    <property type="gene ID" value="ENSMUSG00000020740.14"/>
</dbReference>
<dbReference type="GeneID" id="260302"/>
<dbReference type="KEGG" id="mmu:260302"/>
<dbReference type="UCSC" id="uc007mhy.2">
    <property type="organism name" value="mouse"/>
</dbReference>
<dbReference type="AGR" id="MGI:2384159"/>
<dbReference type="CTD" id="23163"/>
<dbReference type="MGI" id="MGI:2384159">
    <property type="gene designation" value="Gga3"/>
</dbReference>
<dbReference type="VEuPathDB" id="HostDB:ENSMUSG00000020740"/>
<dbReference type="eggNOG" id="KOG1087">
    <property type="taxonomic scope" value="Eukaryota"/>
</dbReference>
<dbReference type="GeneTree" id="ENSGT00940000157333"/>
<dbReference type="InParanoid" id="Q8BMI3"/>
<dbReference type="OMA" id="CGDDFQD"/>
<dbReference type="OrthoDB" id="447025at2759"/>
<dbReference type="PhylomeDB" id="Q8BMI3"/>
<dbReference type="TreeFam" id="TF318574"/>
<dbReference type="Reactome" id="R-MMU-8875656">
    <property type="pathway name" value="MET receptor recycling"/>
</dbReference>
<dbReference type="BioGRID-ORCS" id="260302">
    <property type="hits" value="4 hits in 79 CRISPR screens"/>
</dbReference>
<dbReference type="ChiTaRS" id="Gga3">
    <property type="organism name" value="mouse"/>
</dbReference>
<dbReference type="PRO" id="PR:Q8BMI3"/>
<dbReference type="Proteomes" id="UP000000589">
    <property type="component" value="Chromosome 11"/>
</dbReference>
<dbReference type="RNAct" id="Q8BMI3">
    <property type="molecule type" value="protein"/>
</dbReference>
<dbReference type="Bgee" id="ENSMUSG00000020740">
    <property type="expression patterns" value="Expressed in animal zygote and 230 other cell types or tissues"/>
</dbReference>
<dbReference type="ExpressionAtlas" id="Q8BMI3">
    <property type="expression patterns" value="baseline and differential"/>
</dbReference>
<dbReference type="GO" id="GO:0031901">
    <property type="term" value="C:early endosome membrane"/>
    <property type="evidence" value="ECO:0007669"/>
    <property type="project" value="UniProtKB-SubCell"/>
</dbReference>
<dbReference type="GO" id="GO:0005764">
    <property type="term" value="C:lysosome"/>
    <property type="evidence" value="ECO:0007669"/>
    <property type="project" value="Ensembl"/>
</dbReference>
<dbReference type="GO" id="GO:0032991">
    <property type="term" value="C:protein-containing complex"/>
    <property type="evidence" value="ECO:0007669"/>
    <property type="project" value="Ensembl"/>
</dbReference>
<dbReference type="GO" id="GO:0055038">
    <property type="term" value="C:recycling endosome membrane"/>
    <property type="evidence" value="ECO:0007669"/>
    <property type="project" value="UniProtKB-SubCell"/>
</dbReference>
<dbReference type="GO" id="GO:0005802">
    <property type="term" value="C:trans-Golgi network"/>
    <property type="evidence" value="ECO:0000266"/>
    <property type="project" value="MGI"/>
</dbReference>
<dbReference type="GO" id="GO:0035091">
    <property type="term" value="F:phosphatidylinositol binding"/>
    <property type="evidence" value="ECO:0007669"/>
    <property type="project" value="InterPro"/>
</dbReference>
<dbReference type="GO" id="GO:0140318">
    <property type="term" value="F:protein transporter activity"/>
    <property type="evidence" value="ECO:0007669"/>
    <property type="project" value="Ensembl"/>
</dbReference>
<dbReference type="GO" id="GO:0044877">
    <property type="term" value="F:protein-containing complex binding"/>
    <property type="evidence" value="ECO:0007669"/>
    <property type="project" value="Ensembl"/>
</dbReference>
<dbReference type="GO" id="GO:0031267">
    <property type="term" value="F:small GTPase binding"/>
    <property type="evidence" value="ECO:0000266"/>
    <property type="project" value="MGI"/>
</dbReference>
<dbReference type="GO" id="GO:0043130">
    <property type="term" value="F:ubiquitin binding"/>
    <property type="evidence" value="ECO:0000250"/>
    <property type="project" value="UniProtKB"/>
</dbReference>
<dbReference type="GO" id="GO:0032456">
    <property type="term" value="P:endocytic recycling"/>
    <property type="evidence" value="ECO:0007669"/>
    <property type="project" value="Ensembl"/>
</dbReference>
<dbReference type="GO" id="GO:0043001">
    <property type="term" value="P:Golgi to plasma membrane protein transport"/>
    <property type="evidence" value="ECO:0000250"/>
    <property type="project" value="UniProtKB"/>
</dbReference>
<dbReference type="GO" id="GO:1902430">
    <property type="term" value="P:negative regulation of amyloid-beta formation"/>
    <property type="evidence" value="ECO:0000250"/>
    <property type="project" value="UniProtKB"/>
</dbReference>
<dbReference type="GO" id="GO:0045732">
    <property type="term" value="P:positive regulation of protein catabolic process"/>
    <property type="evidence" value="ECO:0000316"/>
    <property type="project" value="MGI"/>
</dbReference>
<dbReference type="GO" id="GO:0030163">
    <property type="term" value="P:protein catabolic process"/>
    <property type="evidence" value="ECO:0000316"/>
    <property type="project" value="MGI"/>
</dbReference>
<dbReference type="GO" id="GO:0031648">
    <property type="term" value="P:protein destabilization"/>
    <property type="evidence" value="ECO:0000250"/>
    <property type="project" value="UniProtKB"/>
</dbReference>
<dbReference type="GO" id="GO:0034394">
    <property type="term" value="P:protein localization to cell surface"/>
    <property type="evidence" value="ECO:0000250"/>
    <property type="project" value="UniProtKB"/>
</dbReference>
<dbReference type="GO" id="GO:0061462">
    <property type="term" value="P:protein localization to lysosome"/>
    <property type="evidence" value="ECO:0000315"/>
    <property type="project" value="MGI"/>
</dbReference>
<dbReference type="GO" id="GO:0006622">
    <property type="term" value="P:protein targeting to lysosome"/>
    <property type="evidence" value="ECO:0007669"/>
    <property type="project" value="Ensembl"/>
</dbReference>
<dbReference type="GO" id="GO:0031647">
    <property type="term" value="P:regulation of protein stability"/>
    <property type="evidence" value="ECO:0000250"/>
    <property type="project" value="UniProtKB"/>
</dbReference>
<dbReference type="CDD" id="cd14240">
    <property type="entry name" value="GAT_GGA3"/>
    <property type="match status" value="1"/>
</dbReference>
<dbReference type="CDD" id="cd17008">
    <property type="entry name" value="VHS_GGA3"/>
    <property type="match status" value="1"/>
</dbReference>
<dbReference type="FunFam" id="2.60.40.1230:FF:000001">
    <property type="entry name" value="ADP-ribosylation factor-binding protein GGA1 isoform 1"/>
    <property type="match status" value="1"/>
</dbReference>
<dbReference type="FunFam" id="1.20.5.170:FF:000023">
    <property type="entry name" value="ADP-ribosylation factor-binding protein GGA3 isoform X1"/>
    <property type="match status" value="1"/>
</dbReference>
<dbReference type="FunFam" id="1.25.40.90:FF:000011">
    <property type="entry name" value="ADP-ribosylation factor-binding protein GGA3 isoform X1"/>
    <property type="match status" value="1"/>
</dbReference>
<dbReference type="Gene3D" id="1.20.5.170">
    <property type="match status" value="1"/>
</dbReference>
<dbReference type="Gene3D" id="1.20.58.160">
    <property type="match status" value="1"/>
</dbReference>
<dbReference type="Gene3D" id="1.25.40.90">
    <property type="match status" value="1"/>
</dbReference>
<dbReference type="Gene3D" id="2.60.40.1230">
    <property type="match status" value="1"/>
</dbReference>
<dbReference type="InterPro" id="IPR008152">
    <property type="entry name" value="Clathrin_a/b/g-adaptin_app_Ig"/>
</dbReference>
<dbReference type="InterPro" id="IPR013041">
    <property type="entry name" value="Clathrin_app_Ig-like_sf"/>
</dbReference>
<dbReference type="InterPro" id="IPR008942">
    <property type="entry name" value="ENTH_VHS"/>
</dbReference>
<dbReference type="InterPro" id="IPR008153">
    <property type="entry name" value="GAE_dom"/>
</dbReference>
<dbReference type="InterPro" id="IPR004152">
    <property type="entry name" value="GAT_dom"/>
</dbReference>
<dbReference type="InterPro" id="IPR044111">
    <property type="entry name" value="GAT_GGA3"/>
</dbReference>
<dbReference type="InterPro" id="IPR038425">
    <property type="entry name" value="GAT_sf"/>
</dbReference>
<dbReference type="InterPro" id="IPR027422">
    <property type="entry name" value="GGA1-3"/>
</dbReference>
<dbReference type="InterPro" id="IPR041198">
    <property type="entry name" value="GGA_N-GAT"/>
</dbReference>
<dbReference type="InterPro" id="IPR002014">
    <property type="entry name" value="VHS_dom"/>
</dbReference>
<dbReference type="InterPro" id="IPR046996">
    <property type="entry name" value="VHS_GGA3"/>
</dbReference>
<dbReference type="PANTHER" id="PTHR45905:SF3">
    <property type="entry name" value="ADP-RIBOSYLATION FACTOR-BINDING PROTEIN GGA3"/>
    <property type="match status" value="1"/>
</dbReference>
<dbReference type="PANTHER" id="PTHR45905">
    <property type="entry name" value="GOLGI-LOCALIZED, GAMMA-ADAPTIN EAR CONTAINING, ARF BINDING PROTEIN"/>
    <property type="match status" value="1"/>
</dbReference>
<dbReference type="Pfam" id="PF02883">
    <property type="entry name" value="Alpha_adaptinC2"/>
    <property type="match status" value="1"/>
</dbReference>
<dbReference type="Pfam" id="PF03127">
    <property type="entry name" value="GAT"/>
    <property type="match status" value="1"/>
</dbReference>
<dbReference type="Pfam" id="PF18308">
    <property type="entry name" value="GGA_N-GAT"/>
    <property type="match status" value="1"/>
</dbReference>
<dbReference type="Pfam" id="PF00790">
    <property type="entry name" value="VHS"/>
    <property type="match status" value="1"/>
</dbReference>
<dbReference type="SMART" id="SM00809">
    <property type="entry name" value="Alpha_adaptinC2"/>
    <property type="match status" value="1"/>
</dbReference>
<dbReference type="SMART" id="SM00288">
    <property type="entry name" value="VHS"/>
    <property type="match status" value="1"/>
</dbReference>
<dbReference type="SUPFAM" id="SSF49348">
    <property type="entry name" value="Clathrin adaptor appendage domain"/>
    <property type="match status" value="1"/>
</dbReference>
<dbReference type="SUPFAM" id="SSF48464">
    <property type="entry name" value="ENTH/VHS domain"/>
    <property type="match status" value="1"/>
</dbReference>
<dbReference type="SUPFAM" id="SSF89009">
    <property type="entry name" value="GAT-like domain"/>
    <property type="match status" value="1"/>
</dbReference>
<dbReference type="PROSITE" id="PS50180">
    <property type="entry name" value="GAE"/>
    <property type="match status" value="1"/>
</dbReference>
<dbReference type="PROSITE" id="PS50909">
    <property type="entry name" value="GAT"/>
    <property type="match status" value="1"/>
</dbReference>
<dbReference type="PROSITE" id="PS50179">
    <property type="entry name" value="VHS"/>
    <property type="match status" value="1"/>
</dbReference>
<sequence>MAEAEGESLESWLNKATNPSNRQEDWEYIIGFCDQINKELEGPQIAVRLLAHKIQSPQEWEAVQALTVLEACMKNCGRRLHNEVGKFRFLNELIKVVSPKYLGDRVSEKVKTKVIELLFSWTLALPEEAKIKDAYHMLKRQGIVQSDPPIPMDRTLIPSPPPRPKNPVFDDEEKSKLLARLLKSKNPDDLQEANRLIKSMVKEDEARIQKVTKRLHTLEEVNNNVKLLHEMLLHYSQEYSSDADKELMKELFDRCENKRRTLFKLASETEDNDNSLGDILQASDNLSRVINSYKTIIEGQIVNGEVTTSTMPDSEGNSHCGNQGALIDLAELDAPSNSSPALAPPTSGIPILPPPPQTSGPPRSRSSSQAEAPPGSDSTNNALSLLDEELLCLGLTDPAPTAPKESPGSSQWHLFQNEPPSDLDFFSPRPVPAASCPSDGPQLPPPVSTSSMSQAPLPAAFPAPVVPASAPTHSTGSFMFSSGPAPALAPKAEPKGPEYPSSSTSHRLDALDQLLEEAKVTSGLVKPVSCFSPGPTASPLLPASAPARPLLPFSTGPGSPLFQSQGSPQKGPELSLASVHVPLESIKPSSALPVTAYDKNGFRILFHFAKECPPGRPDVLVVVVSMLNTAPLPVKSIVLQAAVPKSMKVKLQPPSGTELSPFSPIQPPAAITQVMLLANPMKEKVRLRYKLTFALGEQLSTELGEVDQFPPVEQWGNL</sequence>
<name>GGA3_MOUSE</name>
<accession>Q8BMI3</accession>
<accession>Q3V1Y0</accession>
<accession>Q80U71</accession>
<keyword id="KW-0967">Endosome</keyword>
<keyword id="KW-0333">Golgi apparatus</keyword>
<keyword id="KW-0472">Membrane</keyword>
<keyword id="KW-0597">Phosphoprotein</keyword>
<keyword id="KW-0653">Protein transport</keyword>
<keyword id="KW-1185">Reference proteome</keyword>
<keyword id="KW-0813">Transport</keyword>
<keyword id="KW-0832">Ubl conjugation</keyword>
<proteinExistence type="evidence at protein level"/>
<organism>
    <name type="scientific">Mus musculus</name>
    <name type="common">Mouse</name>
    <dbReference type="NCBI Taxonomy" id="10090"/>
    <lineage>
        <taxon>Eukaryota</taxon>
        <taxon>Metazoa</taxon>
        <taxon>Chordata</taxon>
        <taxon>Craniata</taxon>
        <taxon>Vertebrata</taxon>
        <taxon>Euteleostomi</taxon>
        <taxon>Mammalia</taxon>
        <taxon>Eutheria</taxon>
        <taxon>Euarchontoglires</taxon>
        <taxon>Glires</taxon>
        <taxon>Rodentia</taxon>
        <taxon>Myomorpha</taxon>
        <taxon>Muroidea</taxon>
        <taxon>Muridae</taxon>
        <taxon>Murinae</taxon>
        <taxon>Mus</taxon>
        <taxon>Mus</taxon>
    </lineage>
</organism>
<gene>
    <name type="primary">Gga3</name>
    <name type="synonym">Kiaa0154</name>
</gene>
<feature type="chain" id="PRO_0000212685" description="ADP-ribosylation factor-binding protein GGA3">
    <location>
        <begin position="1"/>
        <end position="718"/>
    </location>
</feature>
<feature type="domain" description="VHS" evidence="5">
    <location>
        <begin position="16"/>
        <end position="146"/>
    </location>
</feature>
<feature type="domain" description="GAT" evidence="6">
    <location>
        <begin position="171"/>
        <end position="298"/>
    </location>
</feature>
<feature type="domain" description="GAE" evidence="4">
    <location>
        <begin position="589"/>
        <end position="710"/>
    </location>
</feature>
<feature type="region of interest" description="Unstructured hinge">
    <location>
        <begin position="299"/>
        <end position="588"/>
    </location>
</feature>
<feature type="region of interest" description="Disordered" evidence="7">
    <location>
        <begin position="334"/>
        <end position="381"/>
    </location>
</feature>
<feature type="region of interest" description="Disordered" evidence="7">
    <location>
        <begin position="395"/>
        <end position="455"/>
    </location>
</feature>
<feature type="region of interest" description="Disordered" evidence="7">
    <location>
        <begin position="477"/>
        <end position="506"/>
    </location>
</feature>
<feature type="short sequence motif" description="Autoinhibitory" evidence="1">
    <location>
        <begin position="387"/>
        <end position="391"/>
    </location>
</feature>
<feature type="compositionally biased region" description="Low complexity" evidence="7">
    <location>
        <begin position="334"/>
        <end position="350"/>
    </location>
</feature>
<feature type="compositionally biased region" description="Low complexity" evidence="7">
    <location>
        <begin position="360"/>
        <end position="369"/>
    </location>
</feature>
<feature type="modified residue" description="Phosphoserine" evidence="3">
    <location>
        <position position="159"/>
    </location>
</feature>
<feature type="modified residue" description="Phosphoserine" evidence="3">
    <location>
        <position position="275"/>
    </location>
</feature>
<feature type="sequence conflict" description="In Ref. 1; BAC27246." evidence="9" ref="1">
    <original>P</original>
    <variation>T</variation>
    <location>
        <position position="151"/>
    </location>
</feature>
<feature type="sequence conflict" description="In Ref. 1; BAC65494." evidence="9" ref="1">
    <original>A</original>
    <variation>V</variation>
    <location>
        <position position="433"/>
    </location>
</feature>
<reference key="1">
    <citation type="journal article" date="2003" name="DNA Res.">
        <title>Prediction of the coding sequences of mouse homologues of KIAA gene: III. The complete nucleotide sequences of 500 mouse KIAA-homologous cDNAs identified by screening of terminal sequences of cDNA clones randomly sampled from size-fractionated libraries.</title>
        <authorList>
            <person name="Okazaki N."/>
            <person name="Kikuno R."/>
            <person name="Ohara R."/>
            <person name="Inamoto S."/>
            <person name="Koseki H."/>
            <person name="Hiraoka S."/>
            <person name="Saga Y."/>
            <person name="Nagase T."/>
            <person name="Ohara O."/>
            <person name="Koga H."/>
        </authorList>
    </citation>
    <scope>NUCLEOTIDE SEQUENCE [LARGE SCALE MRNA]</scope>
    <source>
        <tissue>Fetal brain</tissue>
    </source>
</reference>
<reference key="2">
    <citation type="submission" date="2004-03" db="EMBL/GenBank/DDBJ databases">
        <authorList>
            <person name="Okazaki N."/>
            <person name="Kikuno R."/>
            <person name="Nagase T."/>
            <person name="Ohara O."/>
            <person name="Koga H."/>
        </authorList>
    </citation>
    <scope>SEQUENCE REVISION</scope>
</reference>
<reference key="3">
    <citation type="journal article" date="2005" name="Science">
        <title>The transcriptional landscape of the mammalian genome.</title>
        <authorList>
            <person name="Carninci P."/>
            <person name="Kasukawa T."/>
            <person name="Katayama S."/>
            <person name="Gough J."/>
            <person name="Frith M.C."/>
            <person name="Maeda N."/>
            <person name="Oyama R."/>
            <person name="Ravasi T."/>
            <person name="Lenhard B."/>
            <person name="Wells C."/>
            <person name="Kodzius R."/>
            <person name="Shimokawa K."/>
            <person name="Bajic V.B."/>
            <person name="Brenner S.E."/>
            <person name="Batalov S."/>
            <person name="Forrest A.R."/>
            <person name="Zavolan M."/>
            <person name="Davis M.J."/>
            <person name="Wilming L.G."/>
            <person name="Aidinis V."/>
            <person name="Allen J.E."/>
            <person name="Ambesi-Impiombato A."/>
            <person name="Apweiler R."/>
            <person name="Aturaliya R.N."/>
            <person name="Bailey T.L."/>
            <person name="Bansal M."/>
            <person name="Baxter L."/>
            <person name="Beisel K.W."/>
            <person name="Bersano T."/>
            <person name="Bono H."/>
            <person name="Chalk A.M."/>
            <person name="Chiu K.P."/>
            <person name="Choudhary V."/>
            <person name="Christoffels A."/>
            <person name="Clutterbuck D.R."/>
            <person name="Crowe M.L."/>
            <person name="Dalla E."/>
            <person name="Dalrymple B.P."/>
            <person name="de Bono B."/>
            <person name="Della Gatta G."/>
            <person name="di Bernardo D."/>
            <person name="Down T."/>
            <person name="Engstrom P."/>
            <person name="Fagiolini M."/>
            <person name="Faulkner G."/>
            <person name="Fletcher C.F."/>
            <person name="Fukushima T."/>
            <person name="Furuno M."/>
            <person name="Futaki S."/>
            <person name="Gariboldi M."/>
            <person name="Georgii-Hemming P."/>
            <person name="Gingeras T.R."/>
            <person name="Gojobori T."/>
            <person name="Green R.E."/>
            <person name="Gustincich S."/>
            <person name="Harbers M."/>
            <person name="Hayashi Y."/>
            <person name="Hensch T.K."/>
            <person name="Hirokawa N."/>
            <person name="Hill D."/>
            <person name="Huminiecki L."/>
            <person name="Iacono M."/>
            <person name="Ikeo K."/>
            <person name="Iwama A."/>
            <person name="Ishikawa T."/>
            <person name="Jakt M."/>
            <person name="Kanapin A."/>
            <person name="Katoh M."/>
            <person name="Kawasawa Y."/>
            <person name="Kelso J."/>
            <person name="Kitamura H."/>
            <person name="Kitano H."/>
            <person name="Kollias G."/>
            <person name="Krishnan S.P."/>
            <person name="Kruger A."/>
            <person name="Kummerfeld S.K."/>
            <person name="Kurochkin I.V."/>
            <person name="Lareau L.F."/>
            <person name="Lazarevic D."/>
            <person name="Lipovich L."/>
            <person name="Liu J."/>
            <person name="Liuni S."/>
            <person name="McWilliam S."/>
            <person name="Madan Babu M."/>
            <person name="Madera M."/>
            <person name="Marchionni L."/>
            <person name="Matsuda H."/>
            <person name="Matsuzawa S."/>
            <person name="Miki H."/>
            <person name="Mignone F."/>
            <person name="Miyake S."/>
            <person name="Morris K."/>
            <person name="Mottagui-Tabar S."/>
            <person name="Mulder N."/>
            <person name="Nakano N."/>
            <person name="Nakauchi H."/>
            <person name="Ng P."/>
            <person name="Nilsson R."/>
            <person name="Nishiguchi S."/>
            <person name="Nishikawa S."/>
            <person name="Nori F."/>
            <person name="Ohara O."/>
            <person name="Okazaki Y."/>
            <person name="Orlando V."/>
            <person name="Pang K.C."/>
            <person name="Pavan W.J."/>
            <person name="Pavesi G."/>
            <person name="Pesole G."/>
            <person name="Petrovsky N."/>
            <person name="Piazza S."/>
            <person name="Reed J."/>
            <person name="Reid J.F."/>
            <person name="Ring B.Z."/>
            <person name="Ringwald M."/>
            <person name="Rost B."/>
            <person name="Ruan Y."/>
            <person name="Salzberg S.L."/>
            <person name="Sandelin A."/>
            <person name="Schneider C."/>
            <person name="Schoenbach C."/>
            <person name="Sekiguchi K."/>
            <person name="Semple C.A."/>
            <person name="Seno S."/>
            <person name="Sessa L."/>
            <person name="Sheng Y."/>
            <person name="Shibata Y."/>
            <person name="Shimada H."/>
            <person name="Shimada K."/>
            <person name="Silva D."/>
            <person name="Sinclair B."/>
            <person name="Sperling S."/>
            <person name="Stupka E."/>
            <person name="Sugiura K."/>
            <person name="Sultana R."/>
            <person name="Takenaka Y."/>
            <person name="Taki K."/>
            <person name="Tammoja K."/>
            <person name="Tan S.L."/>
            <person name="Tang S."/>
            <person name="Taylor M.S."/>
            <person name="Tegner J."/>
            <person name="Teichmann S.A."/>
            <person name="Ueda H.R."/>
            <person name="van Nimwegen E."/>
            <person name="Verardo R."/>
            <person name="Wei C.L."/>
            <person name="Yagi K."/>
            <person name="Yamanishi H."/>
            <person name="Zabarovsky E."/>
            <person name="Zhu S."/>
            <person name="Zimmer A."/>
            <person name="Hide W."/>
            <person name="Bult C."/>
            <person name="Grimmond S.M."/>
            <person name="Teasdale R.D."/>
            <person name="Liu E.T."/>
            <person name="Brusic V."/>
            <person name="Quackenbush J."/>
            <person name="Wahlestedt C."/>
            <person name="Mattick J.S."/>
            <person name="Hume D.A."/>
            <person name="Kai C."/>
            <person name="Sasaki D."/>
            <person name="Tomaru Y."/>
            <person name="Fukuda S."/>
            <person name="Kanamori-Katayama M."/>
            <person name="Suzuki M."/>
            <person name="Aoki J."/>
            <person name="Arakawa T."/>
            <person name="Iida J."/>
            <person name="Imamura K."/>
            <person name="Itoh M."/>
            <person name="Kato T."/>
            <person name="Kawaji H."/>
            <person name="Kawagashira N."/>
            <person name="Kawashima T."/>
            <person name="Kojima M."/>
            <person name="Kondo S."/>
            <person name="Konno H."/>
            <person name="Nakano K."/>
            <person name="Ninomiya N."/>
            <person name="Nishio T."/>
            <person name="Okada M."/>
            <person name="Plessy C."/>
            <person name="Shibata K."/>
            <person name="Shiraki T."/>
            <person name="Suzuki S."/>
            <person name="Tagami M."/>
            <person name="Waki K."/>
            <person name="Watahiki A."/>
            <person name="Okamura-Oho Y."/>
            <person name="Suzuki H."/>
            <person name="Kawai J."/>
            <person name="Hayashizaki Y."/>
        </authorList>
    </citation>
    <scope>NUCLEOTIDE SEQUENCE [LARGE SCALE MRNA]</scope>
    <source>
        <strain>C57BL/6J</strain>
        <tissue>Forelimb</tissue>
        <tissue>Head</tissue>
    </source>
</reference>
<reference key="4">
    <citation type="journal article" date="2009" name="PLoS Biol.">
        <title>Lineage-specific biology revealed by a finished genome assembly of the mouse.</title>
        <authorList>
            <person name="Church D.M."/>
            <person name="Goodstadt L."/>
            <person name="Hillier L.W."/>
            <person name="Zody M.C."/>
            <person name="Goldstein S."/>
            <person name="She X."/>
            <person name="Bult C.J."/>
            <person name="Agarwala R."/>
            <person name="Cherry J.L."/>
            <person name="DiCuccio M."/>
            <person name="Hlavina W."/>
            <person name="Kapustin Y."/>
            <person name="Meric P."/>
            <person name="Maglott D."/>
            <person name="Birtle Z."/>
            <person name="Marques A.C."/>
            <person name="Graves T."/>
            <person name="Zhou S."/>
            <person name="Teague B."/>
            <person name="Potamousis K."/>
            <person name="Churas C."/>
            <person name="Place M."/>
            <person name="Herschleb J."/>
            <person name="Runnheim R."/>
            <person name="Forrest D."/>
            <person name="Amos-Landgraf J."/>
            <person name="Schwartz D.C."/>
            <person name="Cheng Z."/>
            <person name="Lindblad-Toh K."/>
            <person name="Eichler E.E."/>
            <person name="Ponting C.P."/>
        </authorList>
    </citation>
    <scope>NUCLEOTIDE SEQUENCE [LARGE SCALE GENOMIC DNA]</scope>
    <source>
        <strain>C57BL/6J</strain>
    </source>
</reference>
<reference key="5">
    <citation type="journal article" date="2002" name="Biochem. J.">
        <title>GGA proteins associate with Golgi membranes through interaction between their GGAH domains and ADP-ribosylation factors.</title>
        <authorList>
            <person name="Takatsu H."/>
            <person name="Yoshino K."/>
            <person name="Toda K."/>
            <person name="Nakayama K."/>
        </authorList>
    </citation>
    <scope>INTERACTION WITH ARF1; ARF5 AND ARF6</scope>
</reference>
<reference key="6">
    <citation type="journal article" date="2010" name="Cell">
        <title>A tissue-specific atlas of mouse protein phosphorylation and expression.</title>
        <authorList>
            <person name="Huttlin E.L."/>
            <person name="Jedrychowski M.P."/>
            <person name="Elias J.E."/>
            <person name="Goswami T."/>
            <person name="Rad R."/>
            <person name="Beausoleil S.A."/>
            <person name="Villen J."/>
            <person name="Haas W."/>
            <person name="Sowa M.E."/>
            <person name="Gygi S.P."/>
        </authorList>
    </citation>
    <scope>IDENTIFICATION BY MASS SPECTROMETRY [LARGE SCALE ANALYSIS]</scope>
    <source>
        <tissue>Brain</tissue>
        <tissue>Lung</tissue>
        <tissue>Testis</tissue>
    </source>
</reference>
<comment type="function">
    <text evidence="1">Plays a role in protein sorting and trafficking between the trans-Golgi network (TGN) and endosomes. Mediates the ARF-dependent recruitment of clathrin to the TGN and binds ubiquitinated proteins and membrane cargo molecules with a cytosolic acidic cluster-dileucine (DXXLL) motif (By similarity).</text>
</comment>
<comment type="function">
    <text evidence="2 3">Plays a role in protein sorting and trafficking between the trans-Golgi network (TGN) and endosomes. Mediates the ARF-dependent recruitment of clathrin to the TGN and binds ubiquitinated proteins and membrane cargo molecules with a cytosolic acidic cluster-dileucine (DXXLL) motif. Mediates export of the GPCR receptor ADRA2B to the cell surface. Involved in BACE1 transport and sorting as well as regulation of BACE1 protein levels. Regulates retrograde transport of BACE1 from endosomes to the trans-Golgi network via interaction through the VHS motif and dependent of BACE1 phosphorylation. Modulates BACE1 protein levels independently of the interaction between VHS domain and DXXLL motif through recognition of ubiquitination (By similarity). Key player in a novel DXXLL-mediated endosomal sorting machinery to the recycling pathway that targets NTRK1 to the plasma membrane (By similarity).</text>
</comment>
<comment type="subunit">
    <text evidence="2 3 8">Monomer. Interacts with GGA1 and GGA2 (By similarity). Binds to clathrin and activated ARFs, such as ARF1, ARF5 and ARF6 (PubMed:11950392). Binds RABEP1 and RABGEF1. Interacts with the membrane proteins M6PR/CD-MPR and IGF2R/CI-MPR and the accessory proteins SYNRG, EPN4, NECAP1, NECAP2 and AFTPH/aftiphilin. Interacts with TSG101 and UBC. Interacts with ADRA2B. Interacts with NTRK1; the interaction is independent of NTRK1 activation and ubiquitination. Interacts (via VHS domain) with BACE1 (via DXXLL motif) (By similarity).</text>
</comment>
<comment type="subcellular location">
    <subcellularLocation>
        <location evidence="3">Golgi apparatus</location>
        <location evidence="3">trans-Golgi network membrane</location>
        <topology evidence="3">Peripheral membrane protein</topology>
    </subcellularLocation>
    <subcellularLocation>
        <location evidence="3">Endosome membrane</location>
        <topology evidence="3">Peripheral membrane protein</topology>
    </subcellularLocation>
    <subcellularLocation>
        <location evidence="2">Early endosome membrane</location>
        <topology evidence="9">Peripheral membrane protein</topology>
    </subcellularLocation>
    <subcellularLocation>
        <location evidence="2">Recycling endosome membrane</location>
        <topology evidence="9">Peripheral membrane protein</topology>
    </subcellularLocation>
</comment>
<comment type="domain">
    <text evidence="1">The VHS domain functions as a recognition module for sorting signals composed of an acidic cluster followed by two leucines (DXXLL motif).</text>
</comment>
<comment type="domain">
    <text evidence="1">The GAT domain is responsible for interaction with ARF-GTP, UBC and RABEP1. Required for recruitment to the TGN it prevents ARF-GTP hydrolysis (By similarity).</text>
</comment>
<comment type="domain">
    <text evidence="1">The unstructured hinge region contains clathrin-binding and an autoinhibitory (DXXLL) motifs.</text>
</comment>
<comment type="domain">
    <text evidence="1">The GAE domain binds accessory proteins regulating GGAs function.</text>
</comment>
<comment type="PTM">
    <text evidence="1">Phosphorylated by CK2 and dephosphorylated by PP2A. Phosphorylation of GGA3 allows the internal DXXLL motif to bind the VHS domain and to inhibit the recognition of cargo signals (By similarity).</text>
</comment>
<comment type="PTM">
    <text evidence="1">Ubiquitinated.</text>
</comment>
<comment type="PTM">
    <text evidence="3">Proteolytically cleaved during apoptosis by CASP3.</text>
</comment>
<comment type="similarity">
    <text evidence="9">Belongs to the GGA protein family.</text>
</comment>
<comment type="sequence caution" evidence="9">
    <conflict type="erroneous initiation">
        <sequence resource="EMBL-CDS" id="BAC65494"/>
    </conflict>
    <text>Extended N-terminus.</text>
</comment>
<protein>
    <recommendedName>
        <fullName>ADP-ribosylation factor-binding protein GGA3</fullName>
    </recommendedName>
    <alternativeName>
        <fullName>Golgi-localized, gamma ear-containing, ARF-binding protein 3</fullName>
    </alternativeName>
</protein>
<evidence type="ECO:0000250" key="1"/>
<evidence type="ECO:0000250" key="2">
    <source>
        <dbReference type="UniProtKB" id="A0A0G2JV04"/>
    </source>
</evidence>
<evidence type="ECO:0000250" key="3">
    <source>
        <dbReference type="UniProtKB" id="Q9NZ52"/>
    </source>
</evidence>
<evidence type="ECO:0000255" key="4">
    <source>
        <dbReference type="PROSITE-ProRule" id="PRU00093"/>
    </source>
</evidence>
<evidence type="ECO:0000255" key="5">
    <source>
        <dbReference type="PROSITE-ProRule" id="PRU00218"/>
    </source>
</evidence>
<evidence type="ECO:0000255" key="6">
    <source>
        <dbReference type="PROSITE-ProRule" id="PRU00373"/>
    </source>
</evidence>
<evidence type="ECO:0000256" key="7">
    <source>
        <dbReference type="SAM" id="MobiDB-lite"/>
    </source>
</evidence>
<evidence type="ECO:0000269" key="8">
    <source>
    </source>
</evidence>
<evidence type="ECO:0000305" key="9"/>